<sequence length="65" mass="7286">MRIVYLLLPFILLLAQGAAGSSQALGRKSDCFRKNGFCAFLKCPYLTLISGKCSRFHLCCKRIWG</sequence>
<reference key="1">
    <citation type="journal article" date="2001" name="Infect. Immun.">
        <title>Gallinacin-3, an inducible epithelial beta-defensin in the chicken.</title>
        <authorList>
            <person name="Zhao C."/>
            <person name="Nguyen T."/>
            <person name="Liu L."/>
            <person name="Sacco R.E."/>
            <person name="Brogden K.A."/>
            <person name="Lehrer R.I."/>
        </authorList>
    </citation>
    <scope>NUCLEOTIDE SEQUENCE [MRNA]</scope>
    <source>
        <tissue>Trachea</tissue>
    </source>
</reference>
<reference key="2">
    <citation type="submission" date="2006-07" db="EMBL/GenBank/DDBJ databases">
        <title>Chicken beta-defensin in China chicken breeds.</title>
        <authorList>
            <person name="Cao Y."/>
            <person name="Chen Y."/>
            <person name="Bi Y."/>
            <person name="Xie Q."/>
            <person name="Chen J."/>
        </authorList>
    </citation>
    <scope>NUCLEOTIDE SEQUENCE [MRNA]</scope>
    <source>
        <strain>Guangxi Huang</strain>
        <strain>Qingyuan Ma</strain>
    </source>
</reference>
<reference key="3">
    <citation type="journal article" date="1994" name="FEBS Lett.">
        <title>Gallinacins: cysteine-rich antimicrobial peptides of chicken leukocytes.</title>
        <authorList>
            <person name="Harwig S.S.L."/>
            <person name="Swiderek K.M."/>
            <person name="Kokryakov V.N."/>
            <person name="Tan L."/>
            <person name="Lee T.D."/>
            <person name="Panyutich E.A."/>
            <person name="Aleshina G.M."/>
            <person name="Shamova O.V."/>
            <person name="Lehrer R.I."/>
        </authorList>
    </citation>
    <scope>PROTEIN SEQUENCE OF 26-64</scope>
    <source>
        <strain>Cross Broiler-6</strain>
        <tissue>Leukocyte</tissue>
    </source>
</reference>
<reference key="4">
    <citation type="journal article" date="1994" name="J. Leukoc. Biol.">
        <title>Isolation of antimicrobial peptides from avian heterophils.</title>
        <authorList>
            <person name="Evans E.W."/>
            <person name="Beach G.G."/>
            <person name="Wunderlich J."/>
            <person name="Harmon B.G."/>
        </authorList>
    </citation>
    <scope>PROTEIN SEQUENCE OF 26-59</scope>
</reference>
<keyword id="KW-0044">Antibiotic</keyword>
<keyword id="KW-0929">Antimicrobial</keyword>
<keyword id="KW-0211">Defensin</keyword>
<keyword id="KW-0903">Direct protein sequencing</keyword>
<keyword id="KW-1015">Disulfide bond</keyword>
<keyword id="KW-0295">Fungicide</keyword>
<keyword id="KW-1185">Reference proteome</keyword>
<keyword id="KW-0964">Secreted</keyword>
<keyword id="KW-0732">Signal</keyword>
<comment type="function">
    <text>Has bactericidal activity. Potent activity against E.coli ML-35, L.monocytogenes EGD and C.albicans.</text>
</comment>
<comment type="subcellular location">
    <subcellularLocation>
        <location>Secreted</location>
    </subcellularLocation>
    <subcellularLocation>
        <location>Cytoplasmic granule</location>
    </subcellularLocation>
</comment>
<comment type="similarity">
    <text evidence="5">Belongs to the beta-defensin family.</text>
</comment>
<name>GLL1A_CHICK</name>
<proteinExistence type="evidence at protein level"/>
<organism>
    <name type="scientific">Gallus gallus</name>
    <name type="common">Chicken</name>
    <dbReference type="NCBI Taxonomy" id="9031"/>
    <lineage>
        <taxon>Eukaryota</taxon>
        <taxon>Metazoa</taxon>
        <taxon>Chordata</taxon>
        <taxon>Craniata</taxon>
        <taxon>Vertebrata</taxon>
        <taxon>Euteleostomi</taxon>
        <taxon>Archelosauria</taxon>
        <taxon>Archosauria</taxon>
        <taxon>Dinosauria</taxon>
        <taxon>Saurischia</taxon>
        <taxon>Theropoda</taxon>
        <taxon>Coelurosauria</taxon>
        <taxon>Aves</taxon>
        <taxon>Neognathae</taxon>
        <taxon>Galloanserae</taxon>
        <taxon>Galliformes</taxon>
        <taxon>Phasianidae</taxon>
        <taxon>Phasianinae</taxon>
        <taxon>Gallus</taxon>
    </lineage>
</organism>
<accession>P46157</accession>
<accession>P80390</accession>
<accession>Q09MR8</accession>
<accession>Q9DG59</accession>
<dbReference type="EMBL" id="AF181951">
    <property type="protein sequence ID" value="AAG09211.1"/>
    <property type="molecule type" value="mRNA"/>
</dbReference>
<dbReference type="EMBL" id="DQ858337">
    <property type="protein sequence ID" value="ABI48253.1"/>
    <property type="molecule type" value="mRNA"/>
</dbReference>
<dbReference type="EMBL" id="DQ858297">
    <property type="protein sequence ID" value="ABI48213.1"/>
    <property type="molecule type" value="mRNA"/>
</dbReference>
<dbReference type="PIR" id="S43282">
    <property type="entry name" value="S43282"/>
</dbReference>
<dbReference type="SMR" id="P46157"/>
<dbReference type="FunCoup" id="P46157">
    <property type="interactions" value="17"/>
</dbReference>
<dbReference type="TCDB" id="1.C.85.3.1">
    <property type="family name" value="the pore-forming Beta-defensin (Beta-defensin) family"/>
</dbReference>
<dbReference type="InParanoid" id="P46157"/>
<dbReference type="PRO" id="PR:P46157"/>
<dbReference type="Proteomes" id="UP000000539">
    <property type="component" value="Unassembled WGS sequence"/>
</dbReference>
<dbReference type="GO" id="GO:0005615">
    <property type="term" value="C:extracellular space"/>
    <property type="evidence" value="ECO:0000318"/>
    <property type="project" value="GO_Central"/>
</dbReference>
<dbReference type="GO" id="GO:0030141">
    <property type="term" value="C:secretory granule"/>
    <property type="evidence" value="ECO:0000304"/>
    <property type="project" value="AgBase"/>
</dbReference>
<dbReference type="GO" id="GO:0031731">
    <property type="term" value="F:CCR6 chemokine receptor binding"/>
    <property type="evidence" value="ECO:0000318"/>
    <property type="project" value="GO_Central"/>
</dbReference>
<dbReference type="GO" id="GO:0042056">
    <property type="term" value="F:chemoattractant activity"/>
    <property type="evidence" value="ECO:0000318"/>
    <property type="project" value="GO_Central"/>
</dbReference>
<dbReference type="GO" id="GO:0060326">
    <property type="term" value="P:cell chemotaxis"/>
    <property type="evidence" value="ECO:0000318"/>
    <property type="project" value="GO_Central"/>
</dbReference>
<dbReference type="GO" id="GO:0006952">
    <property type="term" value="P:defense response"/>
    <property type="evidence" value="ECO:0000304"/>
    <property type="project" value="AgBase"/>
</dbReference>
<dbReference type="GO" id="GO:0042742">
    <property type="term" value="P:defense response to bacterium"/>
    <property type="evidence" value="ECO:0000318"/>
    <property type="project" value="GO_Central"/>
</dbReference>
<dbReference type="GO" id="GO:0050832">
    <property type="term" value="P:defense response to fungus"/>
    <property type="evidence" value="ECO:0007669"/>
    <property type="project" value="UniProtKB-KW"/>
</dbReference>
<dbReference type="GO" id="GO:0031640">
    <property type="term" value="P:killing of cells of another organism"/>
    <property type="evidence" value="ECO:0007669"/>
    <property type="project" value="UniProtKB-KW"/>
</dbReference>
<dbReference type="InterPro" id="IPR001855">
    <property type="entry name" value="Defensin_beta-like"/>
</dbReference>
<dbReference type="PANTHER" id="PTHR20515">
    <property type="entry name" value="BETA-DEFENSIN"/>
    <property type="match status" value="1"/>
</dbReference>
<dbReference type="PANTHER" id="PTHR20515:SF20">
    <property type="entry name" value="GALLINACIN-1-RELATED"/>
    <property type="match status" value="1"/>
</dbReference>
<dbReference type="Pfam" id="PF00711">
    <property type="entry name" value="Defensin_beta"/>
    <property type="match status" value="1"/>
</dbReference>
<dbReference type="SUPFAM" id="SSF57392">
    <property type="entry name" value="Defensin-like"/>
    <property type="match status" value="1"/>
</dbReference>
<evidence type="ECO:0000250" key="1"/>
<evidence type="ECO:0000255" key="2"/>
<evidence type="ECO:0000269" key="3">
    <source>
    </source>
</evidence>
<evidence type="ECO:0000269" key="4">
    <source>
    </source>
</evidence>
<evidence type="ECO:0000305" key="5"/>
<protein>
    <recommendedName>
        <fullName>Gallinacin-1 alpha</fullName>
        <shortName>Gal-1 alpha</shortName>
    </recommendedName>
    <alternativeName>
        <fullName>Antimicrobial peptide CHP2</fullName>
    </alternativeName>
    <alternativeName>
        <fullName>Chicken heterophil peptide 2</fullName>
    </alternativeName>
</protein>
<feature type="signal peptide" evidence="2">
    <location>
        <begin position="1"/>
        <end position="19"/>
    </location>
</feature>
<feature type="propeptide" id="PRO_0000007010" evidence="3 4">
    <location>
        <begin position="20"/>
        <end position="25"/>
    </location>
</feature>
<feature type="peptide" id="PRO_0000007011" description="Gallinacin-1 alpha">
    <location>
        <begin position="26"/>
        <end position="65"/>
    </location>
</feature>
<feature type="disulfide bond" evidence="1">
    <location>
        <begin position="31"/>
        <end position="59"/>
    </location>
</feature>
<feature type="disulfide bond" evidence="1">
    <location>
        <begin position="38"/>
        <end position="53"/>
    </location>
</feature>
<feature type="disulfide bond" evidence="1">
    <location>
        <begin position="43"/>
        <end position="60"/>
    </location>
</feature>
<feature type="sequence conflict" description="In Ref. 4; AA sequence." evidence="5" ref="4">
    <original>K</original>
    <variation>L</variation>
    <location>
        <position position="52"/>
    </location>
</feature>